<reference key="1">
    <citation type="journal article" date="2005" name="Nucleic Acids Res.">
        <title>The genome sequence of Salmonella enterica serovar Choleraesuis, a highly invasive and resistant zoonotic pathogen.</title>
        <authorList>
            <person name="Chiu C.-H."/>
            <person name="Tang P."/>
            <person name="Chu C."/>
            <person name="Hu S."/>
            <person name="Bao Q."/>
            <person name="Yu J."/>
            <person name="Chou Y.-Y."/>
            <person name="Wang H.-S."/>
            <person name="Lee Y.-S."/>
        </authorList>
    </citation>
    <scope>NUCLEOTIDE SEQUENCE [LARGE SCALE GENOMIC DNA]</scope>
    <source>
        <strain>SC-B67</strain>
    </source>
</reference>
<dbReference type="EC" id="2.1.1.190" evidence="2"/>
<dbReference type="EMBL" id="AE017220">
    <property type="protein sequence ID" value="AAX66803.1"/>
    <property type="molecule type" value="Genomic_DNA"/>
</dbReference>
<dbReference type="RefSeq" id="WP_000046845.1">
    <property type="nucleotide sequence ID" value="NC_006905.1"/>
</dbReference>
<dbReference type="SMR" id="Q57KF9"/>
<dbReference type="KEGG" id="sec:SCH_2897"/>
<dbReference type="HOGENOM" id="CLU_014689_8_2_6"/>
<dbReference type="Proteomes" id="UP000000538">
    <property type="component" value="Chromosome"/>
</dbReference>
<dbReference type="GO" id="GO:0051539">
    <property type="term" value="F:4 iron, 4 sulfur cluster binding"/>
    <property type="evidence" value="ECO:0007669"/>
    <property type="project" value="UniProtKB-KW"/>
</dbReference>
<dbReference type="GO" id="GO:0005506">
    <property type="term" value="F:iron ion binding"/>
    <property type="evidence" value="ECO:0007669"/>
    <property type="project" value="UniProtKB-UniRule"/>
</dbReference>
<dbReference type="GO" id="GO:0003723">
    <property type="term" value="F:RNA binding"/>
    <property type="evidence" value="ECO:0007669"/>
    <property type="project" value="InterPro"/>
</dbReference>
<dbReference type="GO" id="GO:0070041">
    <property type="term" value="F:rRNA (uridine-C5-)-methyltransferase activity"/>
    <property type="evidence" value="ECO:0007669"/>
    <property type="project" value="UniProtKB-UniRule"/>
</dbReference>
<dbReference type="GO" id="GO:0070475">
    <property type="term" value="P:rRNA base methylation"/>
    <property type="evidence" value="ECO:0007669"/>
    <property type="project" value="TreeGrafter"/>
</dbReference>
<dbReference type="CDD" id="cd02440">
    <property type="entry name" value="AdoMet_MTases"/>
    <property type="match status" value="1"/>
</dbReference>
<dbReference type="FunFam" id="3.40.50.150:FF:000009">
    <property type="entry name" value="23S rRNA (Uracil(1939)-C(5))-methyltransferase RlmD"/>
    <property type="match status" value="1"/>
</dbReference>
<dbReference type="FunFam" id="2.40.50.1070:FF:000004">
    <property type="entry name" value="23S rRNA (uracil(1939)-C(5))-methyltransferase RlmD"/>
    <property type="match status" value="1"/>
</dbReference>
<dbReference type="FunFam" id="2.40.50.140:FF:000097">
    <property type="entry name" value="23S rRNA (uracil(1939)-C(5))-methyltransferase RlmD"/>
    <property type="match status" value="1"/>
</dbReference>
<dbReference type="Gene3D" id="2.40.50.1070">
    <property type="match status" value="1"/>
</dbReference>
<dbReference type="Gene3D" id="2.40.50.140">
    <property type="entry name" value="Nucleic acid-binding proteins"/>
    <property type="match status" value="1"/>
</dbReference>
<dbReference type="Gene3D" id="3.40.50.150">
    <property type="entry name" value="Vaccinia Virus protein VP39"/>
    <property type="match status" value="1"/>
</dbReference>
<dbReference type="HAMAP" id="MF_01010">
    <property type="entry name" value="23SrRNA_methyltr_RlmD"/>
    <property type="match status" value="1"/>
</dbReference>
<dbReference type="InterPro" id="IPR001566">
    <property type="entry name" value="23S_rRNA_MeTrfase_RlmD"/>
</dbReference>
<dbReference type="InterPro" id="IPR030390">
    <property type="entry name" value="MeTrfase_TrmA_AS"/>
</dbReference>
<dbReference type="InterPro" id="IPR030391">
    <property type="entry name" value="MeTrfase_TrmA_CS"/>
</dbReference>
<dbReference type="InterPro" id="IPR012340">
    <property type="entry name" value="NA-bd_OB-fold"/>
</dbReference>
<dbReference type="InterPro" id="IPR029063">
    <property type="entry name" value="SAM-dependent_MTases_sf"/>
</dbReference>
<dbReference type="InterPro" id="IPR002792">
    <property type="entry name" value="TRAM_dom"/>
</dbReference>
<dbReference type="InterPro" id="IPR010280">
    <property type="entry name" value="U5_MeTrfase_fam"/>
</dbReference>
<dbReference type="NCBIfam" id="NF009639">
    <property type="entry name" value="PRK13168.1"/>
    <property type="match status" value="1"/>
</dbReference>
<dbReference type="NCBIfam" id="TIGR00479">
    <property type="entry name" value="rumA"/>
    <property type="match status" value="1"/>
</dbReference>
<dbReference type="PANTHER" id="PTHR11061:SF49">
    <property type="entry name" value="23S RRNA (URACIL(1939)-C(5))-METHYLTRANSFERASE RLMD"/>
    <property type="match status" value="1"/>
</dbReference>
<dbReference type="PANTHER" id="PTHR11061">
    <property type="entry name" value="RNA M5U METHYLTRANSFERASE"/>
    <property type="match status" value="1"/>
</dbReference>
<dbReference type="Pfam" id="PF01938">
    <property type="entry name" value="TRAM"/>
    <property type="match status" value="1"/>
</dbReference>
<dbReference type="Pfam" id="PF05958">
    <property type="entry name" value="tRNA_U5-meth_tr"/>
    <property type="match status" value="1"/>
</dbReference>
<dbReference type="SUPFAM" id="SSF50249">
    <property type="entry name" value="Nucleic acid-binding proteins"/>
    <property type="match status" value="1"/>
</dbReference>
<dbReference type="SUPFAM" id="SSF53335">
    <property type="entry name" value="S-adenosyl-L-methionine-dependent methyltransferases"/>
    <property type="match status" value="1"/>
</dbReference>
<dbReference type="PROSITE" id="PS51687">
    <property type="entry name" value="SAM_MT_RNA_M5U"/>
    <property type="match status" value="1"/>
</dbReference>
<dbReference type="PROSITE" id="PS50926">
    <property type="entry name" value="TRAM"/>
    <property type="match status" value="1"/>
</dbReference>
<dbReference type="PROSITE" id="PS01230">
    <property type="entry name" value="TRMA_1"/>
    <property type="match status" value="1"/>
</dbReference>
<dbReference type="PROSITE" id="PS01231">
    <property type="entry name" value="TRMA_2"/>
    <property type="match status" value="1"/>
</dbReference>
<keyword id="KW-0004">4Fe-4S</keyword>
<keyword id="KW-0408">Iron</keyword>
<keyword id="KW-0411">Iron-sulfur</keyword>
<keyword id="KW-0479">Metal-binding</keyword>
<keyword id="KW-0489">Methyltransferase</keyword>
<keyword id="KW-0698">rRNA processing</keyword>
<keyword id="KW-0949">S-adenosyl-L-methionine</keyword>
<keyword id="KW-0808">Transferase</keyword>
<gene>
    <name evidence="2" type="primary">rlmD</name>
    <name type="synonym">rumA</name>
    <name type="ordered locus">SCH_2897</name>
</gene>
<protein>
    <recommendedName>
        <fullName evidence="2">23S rRNA (uracil(1939)-C(5))-methyltransferase RlmD</fullName>
        <ecNumber evidence="2">2.1.1.190</ecNumber>
    </recommendedName>
    <alternativeName>
        <fullName evidence="2">23S rRNA(m5U1939)-methyltransferase</fullName>
    </alternativeName>
</protein>
<proteinExistence type="inferred from homology"/>
<comment type="function">
    <text evidence="2">Catalyzes the formation of 5-methyl-uridine at position 1939 (m5U1939) in 23S rRNA.</text>
</comment>
<comment type="catalytic activity">
    <reaction evidence="2">
        <text>uridine(1939) in 23S rRNA + S-adenosyl-L-methionine = 5-methyluridine(1939) in 23S rRNA + S-adenosyl-L-homocysteine + H(+)</text>
        <dbReference type="Rhea" id="RHEA:42908"/>
        <dbReference type="Rhea" id="RHEA-COMP:10278"/>
        <dbReference type="Rhea" id="RHEA-COMP:10279"/>
        <dbReference type="ChEBI" id="CHEBI:15378"/>
        <dbReference type="ChEBI" id="CHEBI:57856"/>
        <dbReference type="ChEBI" id="CHEBI:59789"/>
        <dbReference type="ChEBI" id="CHEBI:65315"/>
        <dbReference type="ChEBI" id="CHEBI:74447"/>
        <dbReference type="EC" id="2.1.1.190"/>
    </reaction>
</comment>
<comment type="similarity">
    <text evidence="2">Belongs to the class I-like SAM-binding methyltransferase superfamily. RNA M5U methyltransferase family. RlmD subfamily.</text>
</comment>
<accession>Q57KF9</accession>
<sequence>MAQFYSAKRRVTTRQIITVKVNDLDSFGQGVARHNGKALFIPGLLPEESAEVIITEDKKQFARARVSRRLNDSPERETPRCPHFGVCGGCQQQHVSIALQQRSKSAALARLMKHEVKDIIAGAPWGYRRRARLSLNCPPDKPLQMGFRKAGSSDIVNVEQCPVLAPQLAALLPRIRACLASLHGTRHLGHVELVQAGSGTLMILRHTAPLSAADKEKLERFSHSEGLSLFLAPFSEILETVSGEAPWYDSHGLRLAFSPRDFIQVNEAVNQQMVARALEWLDVRAEDRVLDLFCGMGNFTLPLATRAASVVGVEGVPALVEKGRENAIRNGLHNVTFFHENLEEDVTKQPWAKNGFDKVLLDPARAGATGVMRHIIKLKPIRIVYVSCNPATLARDSEALVNAGYEVTRLAMLDMFPHTGHLESMVLFERM</sequence>
<feature type="initiator methionine" description="Removed" evidence="1">
    <location>
        <position position="1"/>
    </location>
</feature>
<feature type="chain" id="PRO_0000229881" description="23S rRNA (uracil(1939)-C(5))-methyltransferase RlmD">
    <location>
        <begin position="2"/>
        <end position="431"/>
    </location>
</feature>
<feature type="domain" description="TRAM" evidence="2">
    <location>
        <begin position="10"/>
        <end position="68"/>
    </location>
</feature>
<feature type="active site" description="Nucleophile" evidence="2">
    <location>
        <position position="388"/>
    </location>
</feature>
<feature type="binding site" evidence="2">
    <location>
        <position position="81"/>
    </location>
    <ligand>
        <name>[4Fe-4S] cluster</name>
        <dbReference type="ChEBI" id="CHEBI:49883"/>
    </ligand>
</feature>
<feature type="binding site" evidence="2">
    <location>
        <position position="87"/>
    </location>
    <ligand>
        <name>[4Fe-4S] cluster</name>
        <dbReference type="ChEBI" id="CHEBI:49883"/>
    </ligand>
</feature>
<feature type="binding site" evidence="2">
    <location>
        <position position="90"/>
    </location>
    <ligand>
        <name>[4Fe-4S] cluster</name>
        <dbReference type="ChEBI" id="CHEBI:49883"/>
    </ligand>
</feature>
<feature type="binding site" evidence="2">
    <location>
        <position position="161"/>
    </location>
    <ligand>
        <name>[4Fe-4S] cluster</name>
        <dbReference type="ChEBI" id="CHEBI:49883"/>
    </ligand>
</feature>
<feature type="binding site" evidence="2">
    <location>
        <position position="264"/>
    </location>
    <ligand>
        <name>S-adenosyl-L-methionine</name>
        <dbReference type="ChEBI" id="CHEBI:59789"/>
    </ligand>
</feature>
<feature type="binding site" evidence="2">
    <location>
        <position position="293"/>
    </location>
    <ligand>
        <name>S-adenosyl-L-methionine</name>
        <dbReference type="ChEBI" id="CHEBI:59789"/>
    </ligand>
</feature>
<feature type="binding site" evidence="2">
    <location>
        <position position="298"/>
    </location>
    <ligand>
        <name>S-adenosyl-L-methionine</name>
        <dbReference type="ChEBI" id="CHEBI:59789"/>
    </ligand>
</feature>
<feature type="binding site" evidence="2">
    <location>
        <position position="314"/>
    </location>
    <ligand>
        <name>S-adenosyl-L-methionine</name>
        <dbReference type="ChEBI" id="CHEBI:59789"/>
    </ligand>
</feature>
<feature type="binding site" evidence="2">
    <location>
        <position position="341"/>
    </location>
    <ligand>
        <name>S-adenosyl-L-methionine</name>
        <dbReference type="ChEBI" id="CHEBI:59789"/>
    </ligand>
</feature>
<feature type="binding site" evidence="2">
    <location>
        <position position="362"/>
    </location>
    <ligand>
        <name>S-adenosyl-L-methionine</name>
        <dbReference type="ChEBI" id="CHEBI:59789"/>
    </ligand>
</feature>
<organism>
    <name type="scientific">Salmonella choleraesuis (strain SC-B67)</name>
    <dbReference type="NCBI Taxonomy" id="321314"/>
    <lineage>
        <taxon>Bacteria</taxon>
        <taxon>Pseudomonadati</taxon>
        <taxon>Pseudomonadota</taxon>
        <taxon>Gammaproteobacteria</taxon>
        <taxon>Enterobacterales</taxon>
        <taxon>Enterobacteriaceae</taxon>
        <taxon>Salmonella</taxon>
    </lineage>
</organism>
<name>RLMD_SALCH</name>
<evidence type="ECO:0000250" key="1"/>
<evidence type="ECO:0000255" key="2">
    <source>
        <dbReference type="HAMAP-Rule" id="MF_01010"/>
    </source>
</evidence>